<dbReference type="EC" id="2.7.1.48" evidence="1"/>
<dbReference type="EMBL" id="CP001177">
    <property type="protein sequence ID" value="ACJ80710.1"/>
    <property type="molecule type" value="Genomic_DNA"/>
</dbReference>
<dbReference type="SMR" id="B7HQD8"/>
<dbReference type="KEGG" id="bcr:BCAH187_A4513"/>
<dbReference type="HOGENOM" id="CLU_021278_1_2_9"/>
<dbReference type="UniPathway" id="UPA00574">
    <property type="reaction ID" value="UER00637"/>
</dbReference>
<dbReference type="UniPathway" id="UPA00579">
    <property type="reaction ID" value="UER00640"/>
</dbReference>
<dbReference type="Proteomes" id="UP000002214">
    <property type="component" value="Chromosome"/>
</dbReference>
<dbReference type="GO" id="GO:0005737">
    <property type="term" value="C:cytoplasm"/>
    <property type="evidence" value="ECO:0007669"/>
    <property type="project" value="UniProtKB-SubCell"/>
</dbReference>
<dbReference type="GO" id="GO:0005524">
    <property type="term" value="F:ATP binding"/>
    <property type="evidence" value="ECO:0007669"/>
    <property type="project" value="UniProtKB-UniRule"/>
</dbReference>
<dbReference type="GO" id="GO:0043771">
    <property type="term" value="F:cytidine kinase activity"/>
    <property type="evidence" value="ECO:0007669"/>
    <property type="project" value="RHEA"/>
</dbReference>
<dbReference type="GO" id="GO:0004849">
    <property type="term" value="F:uridine kinase activity"/>
    <property type="evidence" value="ECO:0007669"/>
    <property type="project" value="UniProtKB-UniRule"/>
</dbReference>
<dbReference type="GO" id="GO:0044211">
    <property type="term" value="P:CTP salvage"/>
    <property type="evidence" value="ECO:0007669"/>
    <property type="project" value="UniProtKB-UniRule"/>
</dbReference>
<dbReference type="GO" id="GO:0044206">
    <property type="term" value="P:UMP salvage"/>
    <property type="evidence" value="ECO:0007669"/>
    <property type="project" value="UniProtKB-UniRule"/>
</dbReference>
<dbReference type="CDD" id="cd02023">
    <property type="entry name" value="UMPK"/>
    <property type="match status" value="1"/>
</dbReference>
<dbReference type="Gene3D" id="3.40.50.300">
    <property type="entry name" value="P-loop containing nucleotide triphosphate hydrolases"/>
    <property type="match status" value="1"/>
</dbReference>
<dbReference type="HAMAP" id="MF_00551">
    <property type="entry name" value="Uridine_kinase"/>
    <property type="match status" value="1"/>
</dbReference>
<dbReference type="InterPro" id="IPR027417">
    <property type="entry name" value="P-loop_NTPase"/>
</dbReference>
<dbReference type="InterPro" id="IPR006083">
    <property type="entry name" value="PRK/URK"/>
</dbReference>
<dbReference type="InterPro" id="IPR026008">
    <property type="entry name" value="Uridine_kinase"/>
</dbReference>
<dbReference type="InterPro" id="IPR000764">
    <property type="entry name" value="Uridine_kinase-like"/>
</dbReference>
<dbReference type="NCBIfam" id="NF004018">
    <property type="entry name" value="PRK05480.1"/>
    <property type="match status" value="1"/>
</dbReference>
<dbReference type="NCBIfam" id="TIGR00235">
    <property type="entry name" value="udk"/>
    <property type="match status" value="1"/>
</dbReference>
<dbReference type="PANTHER" id="PTHR10285">
    <property type="entry name" value="URIDINE KINASE"/>
    <property type="match status" value="1"/>
</dbReference>
<dbReference type="Pfam" id="PF00485">
    <property type="entry name" value="PRK"/>
    <property type="match status" value="1"/>
</dbReference>
<dbReference type="PRINTS" id="PR00988">
    <property type="entry name" value="URIDINKINASE"/>
</dbReference>
<dbReference type="SUPFAM" id="SSF52540">
    <property type="entry name" value="P-loop containing nucleoside triphosphate hydrolases"/>
    <property type="match status" value="1"/>
</dbReference>
<keyword id="KW-0067">ATP-binding</keyword>
<keyword id="KW-0963">Cytoplasm</keyword>
<keyword id="KW-0418">Kinase</keyword>
<keyword id="KW-0547">Nucleotide-binding</keyword>
<keyword id="KW-0808">Transferase</keyword>
<protein>
    <recommendedName>
        <fullName evidence="1">Uridine kinase</fullName>
        <ecNumber evidence="1">2.7.1.48</ecNumber>
    </recommendedName>
    <alternativeName>
        <fullName evidence="1">Cytidine monophosphokinase</fullName>
    </alternativeName>
    <alternativeName>
        <fullName evidence="1">Uridine monophosphokinase</fullName>
    </alternativeName>
</protein>
<name>URK_BACC7</name>
<accession>B7HQD8</accession>
<comment type="catalytic activity">
    <reaction evidence="1">
        <text>uridine + ATP = UMP + ADP + H(+)</text>
        <dbReference type="Rhea" id="RHEA:16825"/>
        <dbReference type="ChEBI" id="CHEBI:15378"/>
        <dbReference type="ChEBI" id="CHEBI:16704"/>
        <dbReference type="ChEBI" id="CHEBI:30616"/>
        <dbReference type="ChEBI" id="CHEBI:57865"/>
        <dbReference type="ChEBI" id="CHEBI:456216"/>
        <dbReference type="EC" id="2.7.1.48"/>
    </reaction>
</comment>
<comment type="catalytic activity">
    <reaction evidence="1">
        <text>cytidine + ATP = CMP + ADP + H(+)</text>
        <dbReference type="Rhea" id="RHEA:24674"/>
        <dbReference type="ChEBI" id="CHEBI:15378"/>
        <dbReference type="ChEBI" id="CHEBI:17562"/>
        <dbReference type="ChEBI" id="CHEBI:30616"/>
        <dbReference type="ChEBI" id="CHEBI:60377"/>
        <dbReference type="ChEBI" id="CHEBI:456216"/>
        <dbReference type="EC" id="2.7.1.48"/>
    </reaction>
</comment>
<comment type="pathway">
    <text evidence="1">Pyrimidine metabolism; CTP biosynthesis via salvage pathway; CTP from cytidine: step 1/3.</text>
</comment>
<comment type="pathway">
    <text evidence="1">Pyrimidine metabolism; UMP biosynthesis via salvage pathway; UMP from uridine: step 1/1.</text>
</comment>
<comment type="subcellular location">
    <subcellularLocation>
        <location evidence="1">Cytoplasm</location>
    </subcellularLocation>
</comment>
<comment type="similarity">
    <text evidence="1">Belongs to the uridine kinase family.</text>
</comment>
<evidence type="ECO:0000255" key="1">
    <source>
        <dbReference type="HAMAP-Rule" id="MF_00551"/>
    </source>
</evidence>
<proteinExistence type="inferred from homology"/>
<organism>
    <name type="scientific">Bacillus cereus (strain AH187)</name>
    <dbReference type="NCBI Taxonomy" id="405534"/>
    <lineage>
        <taxon>Bacteria</taxon>
        <taxon>Bacillati</taxon>
        <taxon>Bacillota</taxon>
        <taxon>Bacilli</taxon>
        <taxon>Bacillales</taxon>
        <taxon>Bacillaceae</taxon>
        <taxon>Bacillus</taxon>
        <taxon>Bacillus cereus group</taxon>
    </lineage>
</organism>
<feature type="chain" id="PRO_1000129067" description="Uridine kinase">
    <location>
        <begin position="1"/>
        <end position="212"/>
    </location>
</feature>
<feature type="binding site" evidence="1">
    <location>
        <begin position="13"/>
        <end position="20"/>
    </location>
    <ligand>
        <name>ATP</name>
        <dbReference type="ChEBI" id="CHEBI:30616"/>
    </ligand>
</feature>
<gene>
    <name evidence="1" type="primary">udk</name>
    <name type="ordered locus">BCAH187_A4513</name>
</gene>
<sequence length="212" mass="24338">MGTNKPVVIGIAGGSGSGKTSVTKAIFDHFKGHSILILEQDYYYKDQSHLPMEERLKTNYDHPLAFDNDLLIEHLQQLLAYKQVEKPVYDYTLHTRSDEIIPVEPKDVIILEGILILEDPRLCELMDIKLFVDTDADLRILRRMQRDIKERGRTMDSVIDQYVNVVRPMHNQFIEPSKKFADIIIPEGGQNHVAIDIMVTKIATILEQKVNL</sequence>
<reference key="1">
    <citation type="submission" date="2008-10" db="EMBL/GenBank/DDBJ databases">
        <title>Genome sequence of Bacillus cereus AH187.</title>
        <authorList>
            <person name="Dodson R.J."/>
            <person name="Durkin A.S."/>
            <person name="Rosovitz M.J."/>
            <person name="Rasko D.A."/>
            <person name="Kolsto A.B."/>
            <person name="Okstad O.A."/>
            <person name="Ravel J."/>
            <person name="Sutton G."/>
        </authorList>
    </citation>
    <scope>NUCLEOTIDE SEQUENCE [LARGE SCALE GENOMIC DNA]</scope>
    <source>
        <strain>AH187</strain>
    </source>
</reference>